<keyword id="KW-0021">Allosteric enzyme</keyword>
<keyword id="KW-0963">Cytoplasm</keyword>
<keyword id="KW-0378">Hydrolase</keyword>
<keyword id="KW-0479">Metal-binding</keyword>
<keyword id="KW-0645">Protease</keyword>
<keyword id="KW-0915">Sodium</keyword>
<keyword id="KW-0888">Threonine protease</keyword>
<comment type="function">
    <text evidence="1">Protease subunit of a proteasome-like degradation complex believed to be a general protein degrading machinery.</text>
</comment>
<comment type="catalytic activity">
    <reaction evidence="1">
        <text>ATP-dependent cleavage of peptide bonds with broad specificity.</text>
        <dbReference type="EC" id="3.4.25.2"/>
    </reaction>
</comment>
<comment type="activity regulation">
    <text evidence="1">Allosterically activated by HslU binding.</text>
</comment>
<comment type="subunit">
    <text evidence="1">A double ring-shaped homohexamer of HslV is capped on each side by a ring-shaped HslU homohexamer. The assembly of the HslU/HslV complex is dependent on binding of ATP.</text>
</comment>
<comment type="subcellular location">
    <subcellularLocation>
        <location evidence="1">Cytoplasm</location>
    </subcellularLocation>
</comment>
<comment type="similarity">
    <text evidence="1">Belongs to the peptidase T1B family. HslV subfamily.</text>
</comment>
<organism>
    <name type="scientific">Marinomonas sp. (strain MWYL1)</name>
    <dbReference type="NCBI Taxonomy" id="400668"/>
    <lineage>
        <taxon>Bacteria</taxon>
        <taxon>Pseudomonadati</taxon>
        <taxon>Pseudomonadota</taxon>
        <taxon>Gammaproteobacteria</taxon>
        <taxon>Oceanospirillales</taxon>
        <taxon>Oceanospirillaceae</taxon>
        <taxon>Marinomonas</taxon>
    </lineage>
</organism>
<gene>
    <name evidence="1" type="primary">hslV</name>
    <name type="ordered locus">Mmwyl1_4128</name>
</gene>
<protein>
    <recommendedName>
        <fullName evidence="1">ATP-dependent protease subunit HslV</fullName>
        <ecNumber evidence="1">3.4.25.2</ecNumber>
    </recommendedName>
</protein>
<name>HSLV_MARMS</name>
<evidence type="ECO:0000255" key="1">
    <source>
        <dbReference type="HAMAP-Rule" id="MF_00248"/>
    </source>
</evidence>
<sequence length="183" mass="19644">MTTILTVRKGNQVVVGGDGQVSLGNTVMKGNARKVRRLYRGEVIAGFAGGTADAFTLFERFEGQLEKHQGHLVRAAVDLAKDWRSDRALRKLEAMLIVANKESTLIITGTGDVVEPQHGALAIGSGGNFAEAAARALIDNTDLTAKEIVEKSLNIAADICVFTNHSLTIEEITIDAQLEDKSK</sequence>
<feature type="chain" id="PRO_1000078424" description="ATP-dependent protease subunit HslV">
    <location>
        <begin position="1"/>
        <end position="183"/>
    </location>
</feature>
<feature type="active site" evidence="1">
    <location>
        <position position="2"/>
    </location>
</feature>
<feature type="binding site" evidence="1">
    <location>
        <position position="157"/>
    </location>
    <ligand>
        <name>Na(+)</name>
        <dbReference type="ChEBI" id="CHEBI:29101"/>
    </ligand>
</feature>
<feature type="binding site" evidence="1">
    <location>
        <position position="160"/>
    </location>
    <ligand>
        <name>Na(+)</name>
        <dbReference type="ChEBI" id="CHEBI:29101"/>
    </ligand>
</feature>
<feature type="binding site" evidence="1">
    <location>
        <position position="163"/>
    </location>
    <ligand>
        <name>Na(+)</name>
        <dbReference type="ChEBI" id="CHEBI:29101"/>
    </ligand>
</feature>
<reference key="1">
    <citation type="submission" date="2007-06" db="EMBL/GenBank/DDBJ databases">
        <title>Complete sequence of Marinomonas sp. MWYL1.</title>
        <authorList>
            <consortium name="US DOE Joint Genome Institute"/>
            <person name="Copeland A."/>
            <person name="Lucas S."/>
            <person name="Lapidus A."/>
            <person name="Barry K."/>
            <person name="Glavina del Rio T."/>
            <person name="Dalin E."/>
            <person name="Tice H."/>
            <person name="Pitluck S."/>
            <person name="Kiss H."/>
            <person name="Brettin T."/>
            <person name="Bruce D."/>
            <person name="Detter J.C."/>
            <person name="Han C."/>
            <person name="Schmutz J."/>
            <person name="Larimer F."/>
            <person name="Land M."/>
            <person name="Hauser L."/>
            <person name="Kyrpides N."/>
            <person name="Kim E."/>
            <person name="Johnston A.W.B."/>
            <person name="Todd J.D."/>
            <person name="Rogers R."/>
            <person name="Wexler M."/>
            <person name="Bond P.L."/>
            <person name="Li Y."/>
            <person name="Richardson P."/>
        </authorList>
    </citation>
    <scope>NUCLEOTIDE SEQUENCE [LARGE SCALE GENOMIC DNA]</scope>
    <source>
        <strain>MWYL1</strain>
    </source>
</reference>
<dbReference type="EC" id="3.4.25.2" evidence="1"/>
<dbReference type="EMBL" id="CP000749">
    <property type="protein sequence ID" value="ABR73024.1"/>
    <property type="molecule type" value="Genomic_DNA"/>
</dbReference>
<dbReference type="SMR" id="A6W2U5"/>
<dbReference type="STRING" id="400668.Mmwyl1_4128"/>
<dbReference type="MEROPS" id="T01.007"/>
<dbReference type="KEGG" id="mmw:Mmwyl1_4128"/>
<dbReference type="eggNOG" id="COG5405">
    <property type="taxonomic scope" value="Bacteria"/>
</dbReference>
<dbReference type="HOGENOM" id="CLU_093872_1_0_6"/>
<dbReference type="OrthoDB" id="9804884at2"/>
<dbReference type="GO" id="GO:0009376">
    <property type="term" value="C:HslUV protease complex"/>
    <property type="evidence" value="ECO:0007669"/>
    <property type="project" value="UniProtKB-UniRule"/>
</dbReference>
<dbReference type="GO" id="GO:0005839">
    <property type="term" value="C:proteasome core complex"/>
    <property type="evidence" value="ECO:0007669"/>
    <property type="project" value="InterPro"/>
</dbReference>
<dbReference type="GO" id="GO:0046872">
    <property type="term" value="F:metal ion binding"/>
    <property type="evidence" value="ECO:0007669"/>
    <property type="project" value="UniProtKB-KW"/>
</dbReference>
<dbReference type="GO" id="GO:0004298">
    <property type="term" value="F:threonine-type endopeptidase activity"/>
    <property type="evidence" value="ECO:0007669"/>
    <property type="project" value="UniProtKB-KW"/>
</dbReference>
<dbReference type="GO" id="GO:0051603">
    <property type="term" value="P:proteolysis involved in protein catabolic process"/>
    <property type="evidence" value="ECO:0007669"/>
    <property type="project" value="InterPro"/>
</dbReference>
<dbReference type="CDD" id="cd01913">
    <property type="entry name" value="protease_HslV"/>
    <property type="match status" value="1"/>
</dbReference>
<dbReference type="FunFam" id="3.60.20.10:FF:000002">
    <property type="entry name" value="ATP-dependent protease subunit HslV"/>
    <property type="match status" value="1"/>
</dbReference>
<dbReference type="Gene3D" id="3.60.20.10">
    <property type="entry name" value="Glutamine Phosphoribosylpyrophosphate, subunit 1, domain 1"/>
    <property type="match status" value="1"/>
</dbReference>
<dbReference type="HAMAP" id="MF_00248">
    <property type="entry name" value="HslV"/>
    <property type="match status" value="1"/>
</dbReference>
<dbReference type="InterPro" id="IPR022281">
    <property type="entry name" value="ATP-dep_Prtase_HsIV_su"/>
</dbReference>
<dbReference type="InterPro" id="IPR029055">
    <property type="entry name" value="Ntn_hydrolases_N"/>
</dbReference>
<dbReference type="InterPro" id="IPR001353">
    <property type="entry name" value="Proteasome_sua/b"/>
</dbReference>
<dbReference type="InterPro" id="IPR023333">
    <property type="entry name" value="Proteasome_suB-type"/>
</dbReference>
<dbReference type="NCBIfam" id="TIGR03692">
    <property type="entry name" value="ATP_dep_HslV"/>
    <property type="match status" value="1"/>
</dbReference>
<dbReference type="NCBIfam" id="NF003964">
    <property type="entry name" value="PRK05456.1"/>
    <property type="match status" value="1"/>
</dbReference>
<dbReference type="PANTHER" id="PTHR32194:SF0">
    <property type="entry name" value="ATP-DEPENDENT PROTEASE SUBUNIT HSLV"/>
    <property type="match status" value="1"/>
</dbReference>
<dbReference type="PANTHER" id="PTHR32194">
    <property type="entry name" value="METALLOPROTEASE TLDD"/>
    <property type="match status" value="1"/>
</dbReference>
<dbReference type="Pfam" id="PF00227">
    <property type="entry name" value="Proteasome"/>
    <property type="match status" value="1"/>
</dbReference>
<dbReference type="PIRSF" id="PIRSF039093">
    <property type="entry name" value="HslV"/>
    <property type="match status" value="1"/>
</dbReference>
<dbReference type="SUPFAM" id="SSF56235">
    <property type="entry name" value="N-terminal nucleophile aminohydrolases (Ntn hydrolases)"/>
    <property type="match status" value="1"/>
</dbReference>
<dbReference type="PROSITE" id="PS51476">
    <property type="entry name" value="PROTEASOME_BETA_2"/>
    <property type="match status" value="1"/>
</dbReference>
<proteinExistence type="inferred from homology"/>
<accession>A6W2U5</accession>